<evidence type="ECO:0000255" key="1">
    <source>
        <dbReference type="HAMAP-Rule" id="MF_00033"/>
    </source>
</evidence>
<keyword id="KW-0131">Cell cycle</keyword>
<keyword id="KW-0132">Cell division</keyword>
<keyword id="KW-0997">Cell inner membrane</keyword>
<keyword id="KW-1003">Cell membrane</keyword>
<keyword id="KW-0133">Cell shape</keyword>
<keyword id="KW-0961">Cell wall biogenesis/degradation</keyword>
<keyword id="KW-0328">Glycosyltransferase</keyword>
<keyword id="KW-0472">Membrane</keyword>
<keyword id="KW-0573">Peptidoglycan synthesis</keyword>
<keyword id="KW-1185">Reference proteome</keyword>
<keyword id="KW-0808">Transferase</keyword>
<protein>
    <recommendedName>
        <fullName evidence="1">UDP-N-acetylglucosamine--N-acetylmuramyl-(pentapeptide) pyrophosphoryl-undecaprenol N-acetylglucosamine transferase</fullName>
        <ecNumber evidence="1">2.4.1.227</ecNumber>
    </recommendedName>
    <alternativeName>
        <fullName evidence="1">Undecaprenyl-PP-MurNAc-pentapeptide-UDPGlcNAc GlcNAc transferase</fullName>
    </alternativeName>
</protein>
<dbReference type="EC" id="2.4.1.227" evidence="1"/>
<dbReference type="EMBL" id="CP000153">
    <property type="protein sequence ID" value="ABB45081.1"/>
    <property type="molecule type" value="Genomic_DNA"/>
</dbReference>
<dbReference type="RefSeq" id="WP_011373421.1">
    <property type="nucleotide sequence ID" value="NC_007575.1"/>
</dbReference>
<dbReference type="SMR" id="Q30PK0"/>
<dbReference type="STRING" id="326298.Suden_1807"/>
<dbReference type="CAZy" id="GT28">
    <property type="family name" value="Glycosyltransferase Family 28"/>
</dbReference>
<dbReference type="KEGG" id="tdn:Suden_1807"/>
<dbReference type="eggNOG" id="COG0707">
    <property type="taxonomic scope" value="Bacteria"/>
</dbReference>
<dbReference type="HOGENOM" id="CLU_037404_2_1_7"/>
<dbReference type="OrthoDB" id="9808936at2"/>
<dbReference type="UniPathway" id="UPA00219"/>
<dbReference type="Proteomes" id="UP000002714">
    <property type="component" value="Chromosome"/>
</dbReference>
<dbReference type="GO" id="GO:0005886">
    <property type="term" value="C:plasma membrane"/>
    <property type="evidence" value="ECO:0007669"/>
    <property type="project" value="UniProtKB-SubCell"/>
</dbReference>
<dbReference type="GO" id="GO:0051991">
    <property type="term" value="F:UDP-N-acetyl-D-glucosamine:N-acetylmuramoyl-L-alanyl-D-glutamyl-meso-2,6-diaminopimelyl-D-alanyl-D-alanine-diphosphoundecaprenol 4-beta-N-acetylglucosaminlytransferase activity"/>
    <property type="evidence" value="ECO:0007669"/>
    <property type="project" value="RHEA"/>
</dbReference>
<dbReference type="GO" id="GO:0050511">
    <property type="term" value="F:undecaprenyldiphospho-muramoylpentapeptide beta-N-acetylglucosaminyltransferase activity"/>
    <property type="evidence" value="ECO:0007669"/>
    <property type="project" value="UniProtKB-UniRule"/>
</dbReference>
<dbReference type="GO" id="GO:0005975">
    <property type="term" value="P:carbohydrate metabolic process"/>
    <property type="evidence" value="ECO:0007669"/>
    <property type="project" value="InterPro"/>
</dbReference>
<dbReference type="GO" id="GO:0051301">
    <property type="term" value="P:cell division"/>
    <property type="evidence" value="ECO:0007669"/>
    <property type="project" value="UniProtKB-KW"/>
</dbReference>
<dbReference type="GO" id="GO:0071555">
    <property type="term" value="P:cell wall organization"/>
    <property type="evidence" value="ECO:0007669"/>
    <property type="project" value="UniProtKB-KW"/>
</dbReference>
<dbReference type="GO" id="GO:0030259">
    <property type="term" value="P:lipid glycosylation"/>
    <property type="evidence" value="ECO:0007669"/>
    <property type="project" value="UniProtKB-UniRule"/>
</dbReference>
<dbReference type="GO" id="GO:0009252">
    <property type="term" value="P:peptidoglycan biosynthetic process"/>
    <property type="evidence" value="ECO:0007669"/>
    <property type="project" value="UniProtKB-UniRule"/>
</dbReference>
<dbReference type="GO" id="GO:0008360">
    <property type="term" value="P:regulation of cell shape"/>
    <property type="evidence" value="ECO:0007669"/>
    <property type="project" value="UniProtKB-KW"/>
</dbReference>
<dbReference type="CDD" id="cd03785">
    <property type="entry name" value="GT28_MurG"/>
    <property type="match status" value="1"/>
</dbReference>
<dbReference type="Gene3D" id="3.40.50.2000">
    <property type="entry name" value="Glycogen Phosphorylase B"/>
    <property type="match status" value="2"/>
</dbReference>
<dbReference type="HAMAP" id="MF_00033">
    <property type="entry name" value="MurG"/>
    <property type="match status" value="1"/>
</dbReference>
<dbReference type="InterPro" id="IPR006009">
    <property type="entry name" value="GlcNAc_MurG"/>
</dbReference>
<dbReference type="InterPro" id="IPR007235">
    <property type="entry name" value="Glyco_trans_28_C"/>
</dbReference>
<dbReference type="InterPro" id="IPR004276">
    <property type="entry name" value="GlycoTrans_28_N"/>
</dbReference>
<dbReference type="NCBIfam" id="TIGR01133">
    <property type="entry name" value="murG"/>
    <property type="match status" value="1"/>
</dbReference>
<dbReference type="PANTHER" id="PTHR21015:SF22">
    <property type="entry name" value="GLYCOSYLTRANSFERASE"/>
    <property type="match status" value="1"/>
</dbReference>
<dbReference type="PANTHER" id="PTHR21015">
    <property type="entry name" value="UDP-N-ACETYLGLUCOSAMINE--N-ACETYLMURAMYL-(PENTAPEPTIDE) PYROPHOSPHORYL-UNDECAPRENOL N-ACETYLGLUCOSAMINE TRANSFERASE 1"/>
    <property type="match status" value="1"/>
</dbReference>
<dbReference type="Pfam" id="PF04101">
    <property type="entry name" value="Glyco_tran_28_C"/>
    <property type="match status" value="1"/>
</dbReference>
<dbReference type="Pfam" id="PF03033">
    <property type="entry name" value="Glyco_transf_28"/>
    <property type="match status" value="1"/>
</dbReference>
<dbReference type="SUPFAM" id="SSF53756">
    <property type="entry name" value="UDP-Glycosyltransferase/glycogen phosphorylase"/>
    <property type="match status" value="1"/>
</dbReference>
<proteinExistence type="inferred from homology"/>
<feature type="chain" id="PRO_0000315195" description="UDP-N-acetylglucosamine--N-acetylmuramyl-(pentapeptide) pyrophosphoryl-undecaprenol N-acetylglucosamine transferase">
    <location>
        <begin position="1"/>
        <end position="340"/>
    </location>
</feature>
<feature type="binding site" evidence="1">
    <location>
        <begin position="10"/>
        <end position="12"/>
    </location>
    <ligand>
        <name>UDP-N-acetyl-alpha-D-glucosamine</name>
        <dbReference type="ChEBI" id="CHEBI:57705"/>
    </ligand>
</feature>
<feature type="binding site" evidence="1">
    <location>
        <position position="124"/>
    </location>
    <ligand>
        <name>UDP-N-acetyl-alpha-D-glucosamine</name>
        <dbReference type="ChEBI" id="CHEBI:57705"/>
    </ligand>
</feature>
<feature type="binding site" evidence="1">
    <location>
        <position position="179"/>
    </location>
    <ligand>
        <name>UDP-N-acetyl-alpha-D-glucosamine</name>
        <dbReference type="ChEBI" id="CHEBI:57705"/>
    </ligand>
</feature>
<feature type="binding site" evidence="1">
    <location>
        <position position="277"/>
    </location>
    <ligand>
        <name>UDP-N-acetyl-alpha-D-glucosamine</name>
        <dbReference type="ChEBI" id="CHEBI:57705"/>
    </ligand>
</feature>
<sequence length="340" mass="37393">MRLCITGGGTGGHLMIAEALVEACANDGHEAIFIGSTSGQDRKYFEQNSKFSHVYFLQTTGVVNQRGLGKLKALWLVLRAFFASRAILKKHNIQATYSVGGFSAAAASFASLSRLIPLFIHEQNAVYGKLNSILKPFATRFISAYDEASPIKGYPVKDIFFKNARLRDEIKCVIFLGGSQGAKAINDLALSVALELEARGVKIIHQAGERDYERVKSAYEELGVKAELCGFTKEMPSLMARADLAVSRSGASTLWELCANALPSFFIPFPHAASDHQYHNAKFIVDNELGWCQREEEDLRATLLSILPQNLADKSKALMEYSSRDVAKKMITDVVMSLNA</sequence>
<accession>Q30PK0</accession>
<name>MURG_SULDN</name>
<comment type="function">
    <text evidence="1">Cell wall formation. Catalyzes the transfer of a GlcNAc subunit on undecaprenyl-pyrophosphoryl-MurNAc-pentapeptide (lipid intermediate I) to form undecaprenyl-pyrophosphoryl-MurNAc-(pentapeptide)GlcNAc (lipid intermediate II).</text>
</comment>
<comment type="catalytic activity">
    <reaction evidence="1">
        <text>di-trans,octa-cis-undecaprenyl diphospho-N-acetyl-alpha-D-muramoyl-L-alanyl-D-glutamyl-meso-2,6-diaminopimeloyl-D-alanyl-D-alanine + UDP-N-acetyl-alpha-D-glucosamine = di-trans,octa-cis-undecaprenyl diphospho-[N-acetyl-alpha-D-glucosaminyl-(1-&gt;4)]-N-acetyl-alpha-D-muramoyl-L-alanyl-D-glutamyl-meso-2,6-diaminopimeloyl-D-alanyl-D-alanine + UDP + H(+)</text>
        <dbReference type="Rhea" id="RHEA:31227"/>
        <dbReference type="ChEBI" id="CHEBI:15378"/>
        <dbReference type="ChEBI" id="CHEBI:57705"/>
        <dbReference type="ChEBI" id="CHEBI:58223"/>
        <dbReference type="ChEBI" id="CHEBI:61387"/>
        <dbReference type="ChEBI" id="CHEBI:61388"/>
        <dbReference type="EC" id="2.4.1.227"/>
    </reaction>
</comment>
<comment type="pathway">
    <text evidence="1">Cell wall biogenesis; peptidoglycan biosynthesis.</text>
</comment>
<comment type="subcellular location">
    <subcellularLocation>
        <location evidence="1">Cell inner membrane</location>
        <topology evidence="1">Peripheral membrane protein</topology>
        <orientation evidence="1">Cytoplasmic side</orientation>
    </subcellularLocation>
</comment>
<comment type="similarity">
    <text evidence="1">Belongs to the glycosyltransferase 28 family. MurG subfamily.</text>
</comment>
<organism>
    <name type="scientific">Sulfurimonas denitrificans (strain ATCC 33889 / DSM 1251)</name>
    <name type="common">Thiomicrospira denitrificans (strain ATCC 33889 / DSM 1251)</name>
    <dbReference type="NCBI Taxonomy" id="326298"/>
    <lineage>
        <taxon>Bacteria</taxon>
        <taxon>Pseudomonadati</taxon>
        <taxon>Campylobacterota</taxon>
        <taxon>Epsilonproteobacteria</taxon>
        <taxon>Campylobacterales</taxon>
        <taxon>Sulfurimonadaceae</taxon>
        <taxon>Sulfurimonas</taxon>
    </lineage>
</organism>
<reference key="1">
    <citation type="journal article" date="2008" name="Appl. Environ. Microbiol.">
        <title>Genome of the epsilonproteobacterial chemolithoautotroph Sulfurimonas denitrificans.</title>
        <authorList>
            <person name="Sievert S.M."/>
            <person name="Scott K.M."/>
            <person name="Klotz M.G."/>
            <person name="Chain P.S.G."/>
            <person name="Hauser L.J."/>
            <person name="Hemp J."/>
            <person name="Huegler M."/>
            <person name="Land M."/>
            <person name="Lapidus A."/>
            <person name="Larimer F.W."/>
            <person name="Lucas S."/>
            <person name="Malfatti S.A."/>
            <person name="Meyer F."/>
            <person name="Paulsen I.T."/>
            <person name="Ren Q."/>
            <person name="Simon J."/>
            <person name="Bailey K."/>
            <person name="Diaz E."/>
            <person name="Fitzpatrick K.A."/>
            <person name="Glover B."/>
            <person name="Gwatney N."/>
            <person name="Korajkic A."/>
            <person name="Long A."/>
            <person name="Mobberley J.M."/>
            <person name="Pantry S.N."/>
            <person name="Pazder G."/>
            <person name="Peterson S."/>
            <person name="Quintanilla J.D."/>
            <person name="Sprinkle R."/>
            <person name="Stephens J."/>
            <person name="Thomas P."/>
            <person name="Vaughn R."/>
            <person name="Weber M.J."/>
            <person name="Wooten L.L."/>
        </authorList>
    </citation>
    <scope>NUCLEOTIDE SEQUENCE [LARGE SCALE GENOMIC DNA]</scope>
    <source>
        <strain>ATCC 33889 / DSM 1251</strain>
    </source>
</reference>
<gene>
    <name evidence="1" type="primary">murG</name>
    <name type="ordered locus">Suden_1807</name>
</gene>